<accession>Q9TR28</accession>
<sequence>LENRVAEKQKLFQEDNGLPVHLKGGATDN</sequence>
<feature type="chain" id="PRO_0000221001" description="Cytochrome c oxidase subunit 7A1, mitochondrial">
    <location>
        <begin position="1"/>
        <end position="29" status="greater than"/>
    </location>
</feature>
<feature type="region of interest" description="Disordered" evidence="5">
    <location>
        <begin position="1"/>
        <end position="29"/>
    </location>
</feature>
<feature type="compositionally biased region" description="Basic and acidic residues" evidence="5">
    <location>
        <begin position="1"/>
        <end position="13"/>
    </location>
</feature>
<feature type="non-terminal residue">
    <location>
        <position position="29"/>
    </location>
</feature>
<organism>
    <name type="scientific">Ovis aries</name>
    <name type="common">Sheep</name>
    <dbReference type="NCBI Taxonomy" id="9940"/>
    <lineage>
        <taxon>Eukaryota</taxon>
        <taxon>Metazoa</taxon>
        <taxon>Chordata</taxon>
        <taxon>Craniata</taxon>
        <taxon>Vertebrata</taxon>
        <taxon>Euteleostomi</taxon>
        <taxon>Mammalia</taxon>
        <taxon>Eutheria</taxon>
        <taxon>Laurasiatheria</taxon>
        <taxon>Artiodactyla</taxon>
        <taxon>Ruminantia</taxon>
        <taxon>Pecora</taxon>
        <taxon>Bovidae</taxon>
        <taxon>Caprinae</taxon>
        <taxon>Ovis</taxon>
    </lineage>
</organism>
<gene>
    <name type="primary">COX7A1</name>
    <name type="synonym">COX7AH</name>
</gene>
<reference key="1">
    <citation type="journal article" date="1995" name="Comp. Biochem. Physiol.">
        <title>Species-specific expression of cytochrome c oxidase isozymes.</title>
        <authorList>
            <person name="Linder D."/>
            <person name="Freund R."/>
            <person name="Kadenbach B."/>
        </authorList>
    </citation>
    <scope>PROTEIN SEQUENCE</scope>
    <source>
        <tissue>Heart</tissue>
        <tissue>Liver</tissue>
    </source>
</reference>
<protein>
    <recommendedName>
        <fullName>Cytochrome c oxidase subunit 7A1, mitochondrial</fullName>
    </recommendedName>
    <alternativeName>
        <fullName>Cytochrome c oxidase subunit VIIa-heart</fullName>
        <shortName>Cytochrome c oxidase subunit VIIa-H</shortName>
    </alternativeName>
</protein>
<evidence type="ECO:0000250" key="1">
    <source>
        <dbReference type="UniProtKB" id="P07470"/>
    </source>
</evidence>
<evidence type="ECO:0000250" key="2">
    <source>
        <dbReference type="UniProtKB" id="P10174"/>
    </source>
</evidence>
<evidence type="ECO:0000250" key="3">
    <source>
        <dbReference type="UniProtKB" id="P56392"/>
    </source>
</evidence>
<evidence type="ECO:0000250" key="4">
    <source>
        <dbReference type="UniProtKB" id="Q08CE7"/>
    </source>
</evidence>
<evidence type="ECO:0000256" key="5">
    <source>
        <dbReference type="SAM" id="MobiDB-lite"/>
    </source>
</evidence>
<evidence type="ECO:0000305" key="6"/>
<dbReference type="SMR" id="Q9TR28"/>
<dbReference type="STRING" id="9940.ENSOARP00000005673"/>
<dbReference type="PaxDb" id="9940-ENSOARP00000005673"/>
<dbReference type="eggNOG" id="ENOG502SBK9">
    <property type="taxonomic scope" value="Eukaryota"/>
</dbReference>
<dbReference type="UniPathway" id="UPA00705"/>
<dbReference type="Proteomes" id="UP000002356">
    <property type="component" value="Unplaced"/>
</dbReference>
<dbReference type="GO" id="GO:0005743">
    <property type="term" value="C:mitochondrial inner membrane"/>
    <property type="evidence" value="ECO:0007669"/>
    <property type="project" value="UniProtKB-SubCell"/>
</dbReference>
<dbReference type="GO" id="GO:0045277">
    <property type="term" value="C:respiratory chain complex IV"/>
    <property type="evidence" value="ECO:0007669"/>
    <property type="project" value="InterPro"/>
</dbReference>
<dbReference type="GO" id="GO:0016491">
    <property type="term" value="F:oxidoreductase activity"/>
    <property type="evidence" value="ECO:0007669"/>
    <property type="project" value="UniProtKB-KW"/>
</dbReference>
<dbReference type="GO" id="GO:0006123">
    <property type="term" value="P:mitochondrial electron transport, cytochrome c to oxygen"/>
    <property type="evidence" value="ECO:0007669"/>
    <property type="project" value="InterPro"/>
</dbReference>
<dbReference type="GO" id="GO:0097250">
    <property type="term" value="P:mitochondrial respirasome assembly"/>
    <property type="evidence" value="ECO:0000250"/>
    <property type="project" value="UniProtKB"/>
</dbReference>
<dbReference type="GO" id="GO:0002082">
    <property type="term" value="P:regulation of oxidative phosphorylation"/>
    <property type="evidence" value="ECO:0007669"/>
    <property type="project" value="TreeGrafter"/>
</dbReference>
<dbReference type="Gene3D" id="4.10.91.10">
    <property type="entry name" value="Cytochrome c oxidase, subunit VIIa"/>
    <property type="match status" value="1"/>
</dbReference>
<dbReference type="InterPro" id="IPR039297">
    <property type="entry name" value="COX7a"/>
</dbReference>
<dbReference type="InterPro" id="IPR036539">
    <property type="entry name" value="Cyt_c_oxidase_su7a_sf"/>
</dbReference>
<dbReference type="InterPro" id="IPR003177">
    <property type="entry name" value="Cytc_oxidase_su7a_met"/>
</dbReference>
<dbReference type="PANTHER" id="PTHR10510">
    <property type="entry name" value="CYTOCHROME C OXIDASE POLYPEPTIDE 7A"/>
    <property type="match status" value="1"/>
</dbReference>
<dbReference type="PANTHER" id="PTHR10510:SF5">
    <property type="entry name" value="CYTOCHROME C OXIDASE SUBUNIT 7A1, MITOCHONDRIAL"/>
    <property type="match status" value="1"/>
</dbReference>
<dbReference type="Pfam" id="PF02238">
    <property type="entry name" value="COX7a"/>
    <property type="match status" value="1"/>
</dbReference>
<dbReference type="SUPFAM" id="SSF81419">
    <property type="entry name" value="Mitochondrial cytochrome c oxidase subunit VIIa"/>
    <property type="match status" value="1"/>
</dbReference>
<name>CX7A1_SHEEP</name>
<comment type="function">
    <text evidence="2 3 4">Component of the mitochondrial respiratory complex IV (CIV, also named cytochrome c oxidase complex), the last enzyme in the mitochondrial electron transport chain which drives oxidative phosphorylation (By similarity). The CIV complex is the component of the respiratory chain that catalyzes the reduction of oxygen to water (By similarity). Acts as an assembly factor that specifically drives the homodimerization of CIV complexes, mediating the formation of mitochondrial respiratory supercomplexes (respirasomes) containing two CIV: supercomplxes with two molecules of CIV show improved activity (By similarity). Despite being highly expressed in brown adipose tissue, not required for thermogenesis (By similarity).</text>
</comment>
<comment type="pathway">
    <text evidence="3">Energy metabolism; oxidative phosphorylation.</text>
</comment>
<comment type="subunit">
    <text evidence="1">Component of the complex IV (CIV, cytochrome c oxidase), a multisubunit enzyme composed of 14 subunits. The complex is composed of a catalytic core of 3 subunits MT-CO1, MT-CO2 and MT-CO3, encoded in the mitochondrial DNA, and 11 supernumerary subunits COX4I1 (or COX4I2), COX5A, COX5B, COX6A2 (or COX6A1), COX6B1 (or COX6B2), COX6C, COX7A1 (or COX7A2), COX7B, COX7C, COX8B and NDUFA4, which are encoded in the nuclear genome. The complex exists as a monomer or a dimer and forms supercomplexes (SCs) in the inner mitochondrial membrane with NADH-ubiquinone oxidoreductase (complex I, CI) and ubiquinol-cytochrome c oxidoreductase (cytochrome b-c1 complex, complex III, CIII), resulting in different assemblies (supercomplex SCI(1)III(2)IV(1) and megacomplex MCI(2)III(2)IV(2)).</text>
</comment>
<comment type="subcellular location">
    <subcellularLocation>
        <location evidence="1">Mitochondrion inner membrane</location>
        <topology evidence="1">Single-pass membrane protein</topology>
    </subcellularLocation>
</comment>
<comment type="similarity">
    <text evidence="6">Belongs to the cytochrome c oxidase VIIa family.</text>
</comment>
<keyword id="KW-0903">Direct protein sequencing</keyword>
<keyword id="KW-0472">Membrane</keyword>
<keyword id="KW-0496">Mitochondrion</keyword>
<keyword id="KW-0999">Mitochondrion inner membrane</keyword>
<keyword id="KW-0560">Oxidoreductase</keyword>
<keyword id="KW-1185">Reference proteome</keyword>
<keyword id="KW-0812">Transmembrane</keyword>
<keyword id="KW-1133">Transmembrane helix</keyword>
<proteinExistence type="evidence at protein level"/>